<reference key="1">
    <citation type="journal article" date="2010" name="Genome Biol.">
        <title>Structure and dynamics of the pan-genome of Streptococcus pneumoniae and closely related species.</title>
        <authorList>
            <person name="Donati C."/>
            <person name="Hiller N.L."/>
            <person name="Tettelin H."/>
            <person name="Muzzi A."/>
            <person name="Croucher N.J."/>
            <person name="Angiuoli S.V."/>
            <person name="Oggioni M."/>
            <person name="Dunning Hotopp J.C."/>
            <person name="Hu F.Z."/>
            <person name="Riley D.R."/>
            <person name="Covacci A."/>
            <person name="Mitchell T.J."/>
            <person name="Bentley S.D."/>
            <person name="Kilian M."/>
            <person name="Ehrlich G.D."/>
            <person name="Rappuoli R."/>
            <person name="Moxon E.R."/>
            <person name="Masignani V."/>
        </authorList>
    </citation>
    <scope>NUCLEOTIDE SEQUENCE [LARGE SCALE GENOMIC DNA]</scope>
    <source>
        <strain>70585</strain>
    </source>
</reference>
<organism>
    <name type="scientific">Streptococcus pneumoniae (strain 70585)</name>
    <dbReference type="NCBI Taxonomy" id="488221"/>
    <lineage>
        <taxon>Bacteria</taxon>
        <taxon>Bacillati</taxon>
        <taxon>Bacillota</taxon>
        <taxon>Bacilli</taxon>
        <taxon>Lactobacillales</taxon>
        <taxon>Streptococcaceae</taxon>
        <taxon>Streptococcus</taxon>
    </lineage>
</organism>
<gene>
    <name evidence="1" type="primary">hisS</name>
    <name type="ordered locus">SP70585_2230</name>
</gene>
<keyword id="KW-0030">Aminoacyl-tRNA synthetase</keyword>
<keyword id="KW-0067">ATP-binding</keyword>
<keyword id="KW-0963">Cytoplasm</keyword>
<keyword id="KW-0436">Ligase</keyword>
<keyword id="KW-0547">Nucleotide-binding</keyword>
<keyword id="KW-0648">Protein biosynthesis</keyword>
<name>SYH_STRP7</name>
<evidence type="ECO:0000255" key="1">
    <source>
        <dbReference type="HAMAP-Rule" id="MF_00127"/>
    </source>
</evidence>
<dbReference type="EC" id="6.1.1.21" evidence="1"/>
<dbReference type="EMBL" id="CP000918">
    <property type="protein sequence ID" value="ACO16857.1"/>
    <property type="molecule type" value="Genomic_DNA"/>
</dbReference>
<dbReference type="RefSeq" id="WP_000775889.1">
    <property type="nucleotide sequence ID" value="NC_012468.1"/>
</dbReference>
<dbReference type="SMR" id="C1CAV1"/>
<dbReference type="KEGG" id="snm:SP70585_2230"/>
<dbReference type="HOGENOM" id="CLU_025113_1_1_9"/>
<dbReference type="Proteomes" id="UP000002211">
    <property type="component" value="Chromosome"/>
</dbReference>
<dbReference type="GO" id="GO:0005737">
    <property type="term" value="C:cytoplasm"/>
    <property type="evidence" value="ECO:0007669"/>
    <property type="project" value="UniProtKB-SubCell"/>
</dbReference>
<dbReference type="GO" id="GO:0005524">
    <property type="term" value="F:ATP binding"/>
    <property type="evidence" value="ECO:0007669"/>
    <property type="project" value="UniProtKB-UniRule"/>
</dbReference>
<dbReference type="GO" id="GO:0140096">
    <property type="term" value="F:catalytic activity, acting on a protein"/>
    <property type="evidence" value="ECO:0007669"/>
    <property type="project" value="UniProtKB-ARBA"/>
</dbReference>
<dbReference type="GO" id="GO:0004821">
    <property type="term" value="F:histidine-tRNA ligase activity"/>
    <property type="evidence" value="ECO:0007669"/>
    <property type="project" value="UniProtKB-UniRule"/>
</dbReference>
<dbReference type="GO" id="GO:0016740">
    <property type="term" value="F:transferase activity"/>
    <property type="evidence" value="ECO:0007669"/>
    <property type="project" value="UniProtKB-ARBA"/>
</dbReference>
<dbReference type="GO" id="GO:0006427">
    <property type="term" value="P:histidyl-tRNA aminoacylation"/>
    <property type="evidence" value="ECO:0007669"/>
    <property type="project" value="UniProtKB-UniRule"/>
</dbReference>
<dbReference type="CDD" id="cd00773">
    <property type="entry name" value="HisRS-like_core"/>
    <property type="match status" value="1"/>
</dbReference>
<dbReference type="CDD" id="cd00859">
    <property type="entry name" value="HisRS_anticodon"/>
    <property type="match status" value="1"/>
</dbReference>
<dbReference type="FunFam" id="3.30.930.10:FF:000005">
    <property type="entry name" value="Histidine--tRNA ligase"/>
    <property type="match status" value="1"/>
</dbReference>
<dbReference type="FunFam" id="3.40.50.800:FF:000022">
    <property type="entry name" value="Histidine--tRNA ligase"/>
    <property type="match status" value="1"/>
</dbReference>
<dbReference type="Gene3D" id="3.40.50.800">
    <property type="entry name" value="Anticodon-binding domain"/>
    <property type="match status" value="1"/>
</dbReference>
<dbReference type="Gene3D" id="3.30.930.10">
    <property type="entry name" value="Bira Bifunctional Protein, Domain 2"/>
    <property type="match status" value="1"/>
</dbReference>
<dbReference type="HAMAP" id="MF_00127">
    <property type="entry name" value="His_tRNA_synth"/>
    <property type="match status" value="1"/>
</dbReference>
<dbReference type="InterPro" id="IPR006195">
    <property type="entry name" value="aa-tRNA-synth_II"/>
</dbReference>
<dbReference type="InterPro" id="IPR045864">
    <property type="entry name" value="aa-tRNA-synth_II/BPL/LPL"/>
</dbReference>
<dbReference type="InterPro" id="IPR004154">
    <property type="entry name" value="Anticodon-bd"/>
</dbReference>
<dbReference type="InterPro" id="IPR036621">
    <property type="entry name" value="Anticodon-bd_dom_sf"/>
</dbReference>
<dbReference type="InterPro" id="IPR015807">
    <property type="entry name" value="His-tRNA-ligase"/>
</dbReference>
<dbReference type="InterPro" id="IPR041715">
    <property type="entry name" value="HisRS-like_core"/>
</dbReference>
<dbReference type="InterPro" id="IPR004516">
    <property type="entry name" value="HisRS/HisZ"/>
</dbReference>
<dbReference type="InterPro" id="IPR033656">
    <property type="entry name" value="HisRS_anticodon"/>
</dbReference>
<dbReference type="NCBIfam" id="TIGR00442">
    <property type="entry name" value="hisS"/>
    <property type="match status" value="1"/>
</dbReference>
<dbReference type="PANTHER" id="PTHR43707:SF1">
    <property type="entry name" value="HISTIDINE--TRNA LIGASE, MITOCHONDRIAL-RELATED"/>
    <property type="match status" value="1"/>
</dbReference>
<dbReference type="PANTHER" id="PTHR43707">
    <property type="entry name" value="HISTIDYL-TRNA SYNTHETASE"/>
    <property type="match status" value="1"/>
</dbReference>
<dbReference type="Pfam" id="PF03129">
    <property type="entry name" value="HGTP_anticodon"/>
    <property type="match status" value="1"/>
</dbReference>
<dbReference type="Pfam" id="PF13393">
    <property type="entry name" value="tRNA-synt_His"/>
    <property type="match status" value="1"/>
</dbReference>
<dbReference type="PIRSF" id="PIRSF001549">
    <property type="entry name" value="His-tRNA_synth"/>
    <property type="match status" value="1"/>
</dbReference>
<dbReference type="SUPFAM" id="SSF52954">
    <property type="entry name" value="Class II aaRS ABD-related"/>
    <property type="match status" value="1"/>
</dbReference>
<dbReference type="SUPFAM" id="SSF55681">
    <property type="entry name" value="Class II aaRS and biotin synthetases"/>
    <property type="match status" value="1"/>
</dbReference>
<dbReference type="PROSITE" id="PS50862">
    <property type="entry name" value="AA_TRNA_LIGASE_II"/>
    <property type="match status" value="1"/>
</dbReference>
<proteinExistence type="inferred from homology"/>
<sequence length="429" mass="48753">MKLQKPKGTQDILPAESAKWQYVEGFAREIFKRYNYAEVRTPIFEHYEVISRSVGDTTDIVTKEMYDFYDKGDRHITLRPEGTAPVVRSYVENKLFAPEVQKPSKFYYMGPMFRYERPQAGRLRQFHQIGVECFGSSNPATDVETIVMAAHFLKEIGIQGVKLHLNTLGNPESRAAYRQALIDYLTPLKETLSKDSQRRLEENPLRVLDSKEKEDKVAVENAPSILDFLDEESQTHFDAVRQMLENLGVDYIIDTNMVRGLDYYNHTIFEFITEIEGNDLTVCAGGRYDGLVAYFGGPETAGFGFGLGVERLLLILEKQGVALPIENALDVYIAVLGDGANVKALELVQALRQQGFKAERDYLNRKLKAQFKSADVFAAKTLITLGESEVESRQVTVKNNQTREEVQVSLETISQNFSEIFEKLGFYTQ</sequence>
<feature type="chain" id="PRO_1000199154" description="Histidine--tRNA ligase">
    <location>
        <begin position="1"/>
        <end position="429"/>
    </location>
</feature>
<accession>C1CAV1</accession>
<comment type="catalytic activity">
    <reaction evidence="1">
        <text>tRNA(His) + L-histidine + ATP = L-histidyl-tRNA(His) + AMP + diphosphate + H(+)</text>
        <dbReference type="Rhea" id="RHEA:17313"/>
        <dbReference type="Rhea" id="RHEA-COMP:9665"/>
        <dbReference type="Rhea" id="RHEA-COMP:9689"/>
        <dbReference type="ChEBI" id="CHEBI:15378"/>
        <dbReference type="ChEBI" id="CHEBI:30616"/>
        <dbReference type="ChEBI" id="CHEBI:33019"/>
        <dbReference type="ChEBI" id="CHEBI:57595"/>
        <dbReference type="ChEBI" id="CHEBI:78442"/>
        <dbReference type="ChEBI" id="CHEBI:78527"/>
        <dbReference type="ChEBI" id="CHEBI:456215"/>
        <dbReference type="EC" id="6.1.1.21"/>
    </reaction>
</comment>
<comment type="subunit">
    <text evidence="1">Homodimer.</text>
</comment>
<comment type="subcellular location">
    <subcellularLocation>
        <location evidence="1">Cytoplasm</location>
    </subcellularLocation>
</comment>
<comment type="similarity">
    <text evidence="1">Belongs to the class-II aminoacyl-tRNA synthetase family.</text>
</comment>
<protein>
    <recommendedName>
        <fullName evidence="1">Histidine--tRNA ligase</fullName>
        <ecNumber evidence="1">6.1.1.21</ecNumber>
    </recommendedName>
    <alternativeName>
        <fullName evidence="1">Histidyl-tRNA synthetase</fullName>
        <shortName evidence="1">HisRS</shortName>
    </alternativeName>
</protein>